<evidence type="ECO:0000255" key="1">
    <source>
        <dbReference type="HAMAP-Rule" id="MF_00083"/>
    </source>
</evidence>
<evidence type="ECO:0000305" key="2"/>
<feature type="chain" id="PRO_0000187809" description="Peptidyl-tRNA hydrolase">
    <location>
        <begin position="1"/>
        <end position="194"/>
    </location>
</feature>
<feature type="active site" description="Proton acceptor" evidence="1">
    <location>
        <position position="21"/>
    </location>
</feature>
<feature type="binding site" evidence="1">
    <location>
        <position position="16"/>
    </location>
    <ligand>
        <name>tRNA</name>
        <dbReference type="ChEBI" id="CHEBI:17843"/>
    </ligand>
</feature>
<feature type="binding site" evidence="1">
    <location>
        <position position="67"/>
    </location>
    <ligand>
        <name>tRNA</name>
        <dbReference type="ChEBI" id="CHEBI:17843"/>
    </ligand>
</feature>
<feature type="binding site" evidence="1">
    <location>
        <position position="69"/>
    </location>
    <ligand>
        <name>tRNA</name>
        <dbReference type="ChEBI" id="CHEBI:17843"/>
    </ligand>
</feature>
<feature type="binding site" evidence="1">
    <location>
        <position position="115"/>
    </location>
    <ligand>
        <name>tRNA</name>
        <dbReference type="ChEBI" id="CHEBI:17843"/>
    </ligand>
</feature>
<feature type="site" description="Discriminates between blocked and unblocked aminoacyl-tRNA" evidence="1">
    <location>
        <position position="11"/>
    </location>
</feature>
<feature type="site" description="Stabilizes the basic form of H active site to accept a proton" evidence="1">
    <location>
        <position position="94"/>
    </location>
</feature>
<feature type="sequence conflict" description="In Ref. 1; AAB06185." evidence="2" ref="1">
    <original>ER</original>
    <variation>DG</variation>
    <location>
        <begin position="33"/>
        <end position="34"/>
    </location>
</feature>
<accession>P0A282</accession>
<accession>Q60001</accession>
<dbReference type="EC" id="3.1.1.29" evidence="1"/>
<dbReference type="EMBL" id="U31571">
    <property type="protein sequence ID" value="AAB06185.1"/>
    <property type="molecule type" value="Genomic_DNA"/>
</dbReference>
<dbReference type="EMBL" id="AL513382">
    <property type="protein sequence ID" value="CAD02138.1"/>
    <property type="status" value="ALT_INIT"/>
    <property type="molecule type" value="Genomic_DNA"/>
</dbReference>
<dbReference type="EMBL" id="AE014613">
    <property type="protein sequence ID" value="AAO68756.1"/>
    <property type="status" value="ALT_INIT"/>
    <property type="molecule type" value="Genomic_DNA"/>
</dbReference>
<dbReference type="PIR" id="AI0720">
    <property type="entry name" value="AI0720"/>
</dbReference>
<dbReference type="RefSeq" id="NP_456293.1">
    <property type="nucleotide sequence ID" value="NC_003198.1"/>
</dbReference>
<dbReference type="RefSeq" id="WP_000985595.1">
    <property type="nucleotide sequence ID" value="NZ_WSUR01000004.1"/>
</dbReference>
<dbReference type="SMR" id="P0A282"/>
<dbReference type="STRING" id="220341.gene:17585832"/>
<dbReference type="KEGG" id="stt:t1093"/>
<dbReference type="KEGG" id="sty:STY1909"/>
<dbReference type="PATRIC" id="fig|220341.7.peg.1924"/>
<dbReference type="eggNOG" id="COG0193">
    <property type="taxonomic scope" value="Bacteria"/>
</dbReference>
<dbReference type="HOGENOM" id="CLU_062456_3_1_6"/>
<dbReference type="OMA" id="PNTYMNL"/>
<dbReference type="Proteomes" id="UP000000541">
    <property type="component" value="Chromosome"/>
</dbReference>
<dbReference type="Proteomes" id="UP000002670">
    <property type="component" value="Chromosome"/>
</dbReference>
<dbReference type="GO" id="GO:0005737">
    <property type="term" value="C:cytoplasm"/>
    <property type="evidence" value="ECO:0007669"/>
    <property type="project" value="UniProtKB-SubCell"/>
</dbReference>
<dbReference type="GO" id="GO:0004045">
    <property type="term" value="F:peptidyl-tRNA hydrolase activity"/>
    <property type="evidence" value="ECO:0007669"/>
    <property type="project" value="UniProtKB-UniRule"/>
</dbReference>
<dbReference type="GO" id="GO:0000049">
    <property type="term" value="F:tRNA binding"/>
    <property type="evidence" value="ECO:0007669"/>
    <property type="project" value="UniProtKB-UniRule"/>
</dbReference>
<dbReference type="GO" id="GO:0006515">
    <property type="term" value="P:protein quality control for misfolded or incompletely synthesized proteins"/>
    <property type="evidence" value="ECO:0007669"/>
    <property type="project" value="UniProtKB-UniRule"/>
</dbReference>
<dbReference type="GO" id="GO:0072344">
    <property type="term" value="P:rescue of stalled ribosome"/>
    <property type="evidence" value="ECO:0007669"/>
    <property type="project" value="UniProtKB-UniRule"/>
</dbReference>
<dbReference type="CDD" id="cd00462">
    <property type="entry name" value="PTH"/>
    <property type="match status" value="1"/>
</dbReference>
<dbReference type="FunFam" id="3.40.50.1470:FF:000001">
    <property type="entry name" value="Peptidyl-tRNA hydrolase"/>
    <property type="match status" value="1"/>
</dbReference>
<dbReference type="Gene3D" id="3.40.50.1470">
    <property type="entry name" value="Peptidyl-tRNA hydrolase"/>
    <property type="match status" value="1"/>
</dbReference>
<dbReference type="HAMAP" id="MF_00083">
    <property type="entry name" value="Pept_tRNA_hydro_bact"/>
    <property type="match status" value="1"/>
</dbReference>
<dbReference type="InterPro" id="IPR001328">
    <property type="entry name" value="Pept_tRNA_hydro"/>
</dbReference>
<dbReference type="InterPro" id="IPR018171">
    <property type="entry name" value="Pept_tRNA_hydro_CS"/>
</dbReference>
<dbReference type="InterPro" id="IPR036416">
    <property type="entry name" value="Pept_tRNA_hydro_sf"/>
</dbReference>
<dbReference type="NCBIfam" id="TIGR00447">
    <property type="entry name" value="pth"/>
    <property type="match status" value="1"/>
</dbReference>
<dbReference type="PANTHER" id="PTHR17224">
    <property type="entry name" value="PEPTIDYL-TRNA HYDROLASE"/>
    <property type="match status" value="1"/>
</dbReference>
<dbReference type="PANTHER" id="PTHR17224:SF1">
    <property type="entry name" value="PEPTIDYL-TRNA HYDROLASE"/>
    <property type="match status" value="1"/>
</dbReference>
<dbReference type="Pfam" id="PF01195">
    <property type="entry name" value="Pept_tRNA_hydro"/>
    <property type="match status" value="1"/>
</dbReference>
<dbReference type="SUPFAM" id="SSF53178">
    <property type="entry name" value="Peptidyl-tRNA hydrolase-like"/>
    <property type="match status" value="1"/>
</dbReference>
<dbReference type="PROSITE" id="PS01195">
    <property type="entry name" value="PEPT_TRNA_HYDROL_1"/>
    <property type="match status" value="1"/>
</dbReference>
<dbReference type="PROSITE" id="PS01196">
    <property type="entry name" value="PEPT_TRNA_HYDROL_2"/>
    <property type="match status" value="1"/>
</dbReference>
<organism>
    <name type="scientific">Salmonella typhi</name>
    <dbReference type="NCBI Taxonomy" id="90370"/>
    <lineage>
        <taxon>Bacteria</taxon>
        <taxon>Pseudomonadati</taxon>
        <taxon>Pseudomonadota</taxon>
        <taxon>Gammaproteobacteria</taxon>
        <taxon>Enterobacterales</taxon>
        <taxon>Enterobacteriaceae</taxon>
        <taxon>Salmonella</taxon>
    </lineage>
</organism>
<keyword id="KW-0963">Cytoplasm</keyword>
<keyword id="KW-0378">Hydrolase</keyword>
<keyword id="KW-0694">RNA-binding</keyword>
<keyword id="KW-0820">tRNA-binding</keyword>
<name>PTH_SALTI</name>
<sequence>MAIKLIVGLANPGAEYAATRHNAGAWYVDLLAERLRAPLREEPKFFGYTSRITLEGEDVRLLVPTTFMNLSGKAVGAMASFYRIQPDEILVAHDELDLPPGVAKFKLGGGHGGHNGLKDIISKLGNNPNFHRLRVGIGHPGDKNKVVGFVLGKPPVSEQKLIDEAIDEAARCTELWFKEGLAKATSRLHTFKAQ</sequence>
<comment type="function">
    <text>The natural substrate for this enzyme may be peptidyl-tRNAs which drop off the ribosome during protein synthesis. Involved in lambda inhibition of host protein synthesis. PTH activity may, directly or indirectly, be the target for lambda bar RNA leading to rap cell death.</text>
</comment>
<comment type="function">
    <text evidence="1">Hydrolyzes ribosome-free peptidyl-tRNAs (with 1 or more amino acids incorporated), which drop off the ribosome during protein synthesis, or as a result of ribosome stalling.</text>
</comment>
<comment type="function">
    <text evidence="1">Catalyzes the release of premature peptidyl moieties from peptidyl-tRNA molecules trapped in stalled 50S ribosomal subunits, and thus maintains levels of free tRNAs and 50S ribosomes.</text>
</comment>
<comment type="catalytic activity">
    <reaction evidence="1">
        <text>an N-acyl-L-alpha-aminoacyl-tRNA + H2O = an N-acyl-L-amino acid + a tRNA + H(+)</text>
        <dbReference type="Rhea" id="RHEA:54448"/>
        <dbReference type="Rhea" id="RHEA-COMP:10123"/>
        <dbReference type="Rhea" id="RHEA-COMP:13883"/>
        <dbReference type="ChEBI" id="CHEBI:15377"/>
        <dbReference type="ChEBI" id="CHEBI:15378"/>
        <dbReference type="ChEBI" id="CHEBI:59874"/>
        <dbReference type="ChEBI" id="CHEBI:78442"/>
        <dbReference type="ChEBI" id="CHEBI:138191"/>
        <dbReference type="EC" id="3.1.1.29"/>
    </reaction>
</comment>
<comment type="subunit">
    <text evidence="1">Monomer.</text>
</comment>
<comment type="subcellular location">
    <subcellularLocation>
        <location evidence="1">Cytoplasm</location>
    </subcellularLocation>
</comment>
<comment type="similarity">
    <text evidence="1">Belongs to the PTH family.</text>
</comment>
<comment type="sequence caution" evidence="2">
    <conflict type="erroneous initiation">
        <sequence resource="EMBL-CDS" id="AAO68756"/>
    </conflict>
    <text>Extended N-terminus.</text>
</comment>
<comment type="sequence caution" evidence="2">
    <conflict type="erroneous initiation">
        <sequence resource="EMBL-CDS" id="CAD02138"/>
    </conflict>
    <text>Extended N-terminus.</text>
</comment>
<gene>
    <name evidence="1" type="primary">pth</name>
    <name type="ordered locus">STY1909</name>
    <name type="ordered locus">t1093</name>
</gene>
<protein>
    <recommendedName>
        <fullName evidence="1">Peptidyl-tRNA hydrolase</fullName>
        <shortName evidence="1">Pth</shortName>
        <ecNumber evidence="1">3.1.1.29</ecNumber>
    </recommendedName>
</protein>
<reference key="1">
    <citation type="journal article" date="1996" name="Gene">
        <title>Microbial genes homologous to the peptidyl-tRNA hydrolase-encoding gene of Escherichia coli.</title>
        <authorList>
            <person name="de la Vega F.M."/>
            <person name="Galindo J.M."/>
            <person name="Old I.G."/>
            <person name="Guarneros G."/>
        </authorList>
    </citation>
    <scope>NUCLEOTIDE SEQUENCE [GENOMIC DNA]</scope>
    <source>
        <strain>IMSS-1</strain>
    </source>
</reference>
<reference key="2">
    <citation type="journal article" date="2001" name="Nature">
        <title>Complete genome sequence of a multiple drug resistant Salmonella enterica serovar Typhi CT18.</title>
        <authorList>
            <person name="Parkhill J."/>
            <person name="Dougan G."/>
            <person name="James K.D."/>
            <person name="Thomson N.R."/>
            <person name="Pickard D."/>
            <person name="Wain J."/>
            <person name="Churcher C.M."/>
            <person name="Mungall K.L."/>
            <person name="Bentley S.D."/>
            <person name="Holden M.T.G."/>
            <person name="Sebaihia M."/>
            <person name="Baker S."/>
            <person name="Basham D."/>
            <person name="Brooks K."/>
            <person name="Chillingworth T."/>
            <person name="Connerton P."/>
            <person name="Cronin A."/>
            <person name="Davis P."/>
            <person name="Davies R.M."/>
            <person name="Dowd L."/>
            <person name="White N."/>
            <person name="Farrar J."/>
            <person name="Feltwell T."/>
            <person name="Hamlin N."/>
            <person name="Haque A."/>
            <person name="Hien T.T."/>
            <person name="Holroyd S."/>
            <person name="Jagels K."/>
            <person name="Krogh A."/>
            <person name="Larsen T.S."/>
            <person name="Leather S."/>
            <person name="Moule S."/>
            <person name="O'Gaora P."/>
            <person name="Parry C."/>
            <person name="Quail M.A."/>
            <person name="Rutherford K.M."/>
            <person name="Simmonds M."/>
            <person name="Skelton J."/>
            <person name="Stevens K."/>
            <person name="Whitehead S."/>
            <person name="Barrell B.G."/>
        </authorList>
    </citation>
    <scope>NUCLEOTIDE SEQUENCE [LARGE SCALE GENOMIC DNA]</scope>
    <source>
        <strain>CT18</strain>
    </source>
</reference>
<reference key="3">
    <citation type="journal article" date="2003" name="J. Bacteriol.">
        <title>Comparative genomics of Salmonella enterica serovar Typhi strains Ty2 and CT18.</title>
        <authorList>
            <person name="Deng W."/>
            <person name="Liou S.-R."/>
            <person name="Plunkett G. III"/>
            <person name="Mayhew G.F."/>
            <person name="Rose D.J."/>
            <person name="Burland V."/>
            <person name="Kodoyianni V."/>
            <person name="Schwartz D.C."/>
            <person name="Blattner F.R."/>
        </authorList>
    </citation>
    <scope>NUCLEOTIDE SEQUENCE [LARGE SCALE GENOMIC DNA]</scope>
    <source>
        <strain>ATCC 700931 / Ty2</strain>
    </source>
</reference>
<proteinExistence type="inferred from homology"/>